<reference key="1">
    <citation type="journal article" date="2013" name="Toxicon">
        <title>Characterization of the venom from the Australian scorpion Urodacus yaschenkoi: molecular mass analysis of components, cDNA sequences and peptides with antimicrobial activity.</title>
        <authorList>
            <person name="Luna-Ramirez K."/>
            <person name="Quintero-Hernandez V."/>
            <person name="Vargas-Jaimes L."/>
            <person name="Batista C.V."/>
            <person name="Winkel K.D."/>
            <person name="Possani L.D."/>
        </authorList>
    </citation>
    <scope>NUCLEOTIDE SEQUENCE [MRNA]</scope>
    <source>
        <tissue>Venom gland</tissue>
    </source>
</reference>
<proteinExistence type="evidence at transcript level"/>
<feature type="signal peptide" evidence="2">
    <location>
        <begin position="1"/>
        <end position="23"/>
    </location>
</feature>
<feature type="chain" id="PRO_5001091932" description="Toxin-like protein 10">
    <location>
        <begin position="24"/>
        <end position="78"/>
    </location>
</feature>
<organism>
    <name type="scientific">Urodacus yaschenkoi</name>
    <name type="common">Inland robust scorpion</name>
    <dbReference type="NCBI Taxonomy" id="1273102"/>
    <lineage>
        <taxon>Eukaryota</taxon>
        <taxon>Metazoa</taxon>
        <taxon>Ecdysozoa</taxon>
        <taxon>Arthropoda</taxon>
        <taxon>Chelicerata</taxon>
        <taxon>Arachnida</taxon>
        <taxon>Scorpiones</taxon>
        <taxon>Iurida</taxon>
        <taxon>Scorpionoidea</taxon>
        <taxon>Scorpionidae</taxon>
        <taxon>Urodacinae</taxon>
        <taxon>Urodacus</taxon>
    </lineage>
</organism>
<evidence type="ECO:0000250" key="1"/>
<evidence type="ECO:0000255" key="2"/>
<evidence type="ECO:0000305" key="3"/>
<protein>
    <recommendedName>
        <fullName>Toxin-like protein 10</fullName>
    </recommendedName>
</protein>
<sequence length="78" mass="9097">MKATALLIAVFILFSVFGDMGYCEFCDTPHCTRVCYDHCVRLNKHYKTCCMTNINDRIRMECLCEDKTGIKPYYPNNI</sequence>
<accession>L0G8Z2</accession>
<dbReference type="EMBL" id="JX274249">
    <property type="protein sequence ID" value="AGA82763.1"/>
    <property type="molecule type" value="mRNA"/>
</dbReference>
<dbReference type="GO" id="GO:0005576">
    <property type="term" value="C:extracellular region"/>
    <property type="evidence" value="ECO:0007669"/>
    <property type="project" value="UniProtKB-SubCell"/>
</dbReference>
<name>TXUA_UROYA</name>
<keyword id="KW-1015">Disulfide bond</keyword>
<keyword id="KW-0964">Secreted</keyword>
<keyword id="KW-0732">Signal</keyword>
<comment type="subcellular location">
    <subcellularLocation>
        <location evidence="1">Secreted</location>
    </subcellularLocation>
</comment>
<comment type="tissue specificity">
    <text>Expressed by the venom gland.</text>
</comment>
<comment type="PTM">
    <text evidence="3">Contains 4 disulfide bonds.</text>
</comment>